<comment type="function">
    <text evidence="2">Histone methyltransferase that specifically monomethylates 'Lys-4' of histone H3. H3 'Lys-4' methylation represents a specific tag for epigenetic transcriptional activation. Plays a central role in the transcriptional activation of genes. Also has methyltransferase activity toward non-histone proteins.</text>
</comment>
<comment type="catalytic activity">
    <reaction evidence="2 4">
        <text>L-lysyl(4)-[histone H3] + S-adenosyl-L-methionine = N(6)-methyl-L-lysyl(4)-[histone H3] + S-adenosyl-L-homocysteine + H(+)</text>
        <dbReference type="Rhea" id="RHEA:60264"/>
        <dbReference type="Rhea" id="RHEA-COMP:15543"/>
        <dbReference type="Rhea" id="RHEA-COMP:15547"/>
        <dbReference type="ChEBI" id="CHEBI:15378"/>
        <dbReference type="ChEBI" id="CHEBI:29969"/>
        <dbReference type="ChEBI" id="CHEBI:57856"/>
        <dbReference type="ChEBI" id="CHEBI:59789"/>
        <dbReference type="ChEBI" id="CHEBI:61929"/>
        <dbReference type="EC" id="2.1.1.364"/>
    </reaction>
</comment>
<comment type="catalytic activity">
    <reaction evidence="1">
        <text>L-lysyl-[protein] + S-adenosyl-L-methionine = N(6)-methyl-L-lysyl-[protein] + S-adenosyl-L-homocysteine + H(+)</text>
        <dbReference type="Rhea" id="RHEA:51736"/>
        <dbReference type="Rhea" id="RHEA-COMP:9752"/>
        <dbReference type="Rhea" id="RHEA-COMP:13053"/>
        <dbReference type="ChEBI" id="CHEBI:15378"/>
        <dbReference type="ChEBI" id="CHEBI:29969"/>
        <dbReference type="ChEBI" id="CHEBI:57856"/>
        <dbReference type="ChEBI" id="CHEBI:59789"/>
        <dbReference type="ChEBI" id="CHEBI:61929"/>
    </reaction>
    <physiologicalReaction direction="left-to-right" evidence="1">
        <dbReference type="Rhea" id="RHEA:51737"/>
    </physiologicalReaction>
</comment>
<comment type="subcellular location">
    <subcellularLocation>
        <location evidence="2">Nucleus</location>
    </subcellularLocation>
    <subcellularLocation>
        <location evidence="2">Chromosome</location>
    </subcellularLocation>
</comment>
<comment type="domain">
    <text evidence="2">The SET domain is necessary but not sufficient for histone methyltransferase activity.</text>
</comment>
<comment type="similarity">
    <text evidence="4">Belongs to the class V-like SAM-binding methyltransferase superfamily. Histone-lysine methyltransferase family. SET7 subfamily.</text>
</comment>
<reference key="1">
    <citation type="submission" date="2005-06" db="EMBL/GenBank/DDBJ databases">
        <authorList>
            <consortium name="NIH - Xenopus Gene Collection (XGC) project"/>
        </authorList>
    </citation>
    <scope>NUCLEOTIDE SEQUENCE [LARGE SCALE MRNA]</scope>
</reference>
<sequence length="366" mass="40816">MDSEDETVEETVEGLLDDDGLPHGFCTVNYSSTDRFEGHFVHGEKNGRGKFYFFDGSTLEGFYVDDALQGQGIYTYEDGGSLHGTYVEGELNGPAQEYDTDGRLIFKGQYKDNVRHGVCWIYYPDGGSLVGEVNEDGDMTGDKVAYVYPDGRMALYGKFIDAEMLEGKLAILTSVDEGKPHFELVPNGPVYNFDKSTPSCISVNPLFPDPYESERVYVNDSLIHNAGEGLFAKVASAAQTVMSFYNGVRITHQEVDSREWALNGNTISLDDETVLDVPAPYNSYYKYCASLGHKANHSFSPNCMYDTFVHPRFGPIKCIRTMKAVEKDEELTVAYGYDHSVTGKNGPEAPEWYQQQLTAFQATQQK</sequence>
<proteinExistence type="evidence at transcript level"/>
<protein>
    <recommendedName>
        <fullName>Histone-lysine N-methyltransferase SETD7</fullName>
        <ecNumber evidence="2 4">2.1.1.364</ecNumber>
    </recommendedName>
    <alternativeName>
        <fullName>SET domain-containing protein 7</fullName>
    </alternativeName>
</protein>
<gene>
    <name type="primary">setd7</name>
</gene>
<name>SETD7_XENTR</name>
<evidence type="ECO:0000250" key="1">
    <source>
        <dbReference type="UniProtKB" id="Q8VHL1"/>
    </source>
</evidence>
<evidence type="ECO:0000250" key="2">
    <source>
        <dbReference type="UniProtKB" id="Q8WTS6"/>
    </source>
</evidence>
<evidence type="ECO:0000255" key="3">
    <source>
        <dbReference type="PROSITE-ProRule" id="PRU00190"/>
    </source>
</evidence>
<evidence type="ECO:0000255" key="4">
    <source>
        <dbReference type="PROSITE-ProRule" id="PRU00910"/>
    </source>
</evidence>
<feature type="chain" id="PRO_0000316991" description="Histone-lysine N-methyltransferase SETD7">
    <location>
        <begin position="1"/>
        <end position="366"/>
    </location>
</feature>
<feature type="repeat" description="MORN 1">
    <location>
        <begin position="36"/>
        <end position="58"/>
    </location>
</feature>
<feature type="repeat" description="MORN 2">
    <location>
        <begin position="59"/>
        <end position="81"/>
    </location>
</feature>
<feature type="repeat" description="MORN 3">
    <location>
        <begin position="106"/>
        <end position="128"/>
    </location>
</feature>
<feature type="domain" description="SET" evidence="3">
    <location>
        <begin position="214"/>
        <end position="336"/>
    </location>
</feature>
<feature type="binding site" evidence="2">
    <location>
        <begin position="226"/>
        <end position="228"/>
    </location>
    <ligand>
        <name>S-adenosyl-L-methionine</name>
        <dbReference type="ChEBI" id="CHEBI:59789"/>
    </ligand>
</feature>
<feature type="binding site" evidence="2">
    <location>
        <position position="296"/>
    </location>
    <ligand>
        <name>S-adenosyl-L-methionine</name>
        <dbReference type="ChEBI" id="CHEBI:59789"/>
    </ligand>
</feature>
<feature type="binding site" evidence="2">
    <location>
        <position position="297"/>
    </location>
    <ligand>
        <name>S-adenosyl-L-methionine</name>
        <dbReference type="ChEBI" id="CHEBI:59789"/>
    </ligand>
</feature>
<feature type="site" description="Histone H3K4 binding" evidence="2">
    <location>
        <position position="245"/>
    </location>
</feature>
<feature type="site" description="Histone H3K4 binding" evidence="2">
    <location>
        <position position="256"/>
    </location>
</feature>
<feature type="site" description="Histone H3K4 binding" evidence="2">
    <location>
        <position position="266"/>
    </location>
</feature>
<feature type="site" description="Histone H3K4 binding" evidence="2">
    <location>
        <position position="317"/>
    </location>
</feature>
<feature type="site" description="Histone H3K4 binding" evidence="2">
    <location>
        <position position="335"/>
    </location>
</feature>
<accession>Q4QQN5</accession>
<dbReference type="EC" id="2.1.1.364" evidence="2 4"/>
<dbReference type="EMBL" id="BC098189">
    <property type="protein sequence ID" value="AAH98189.1"/>
    <property type="molecule type" value="mRNA"/>
</dbReference>
<dbReference type="RefSeq" id="NP_001027510.1">
    <property type="nucleotide sequence ID" value="NM_001032339.1"/>
</dbReference>
<dbReference type="SMR" id="Q4QQN5"/>
<dbReference type="FunCoup" id="Q4QQN5">
    <property type="interactions" value="2017"/>
</dbReference>
<dbReference type="STRING" id="8364.ENSXETP00000037259"/>
<dbReference type="PaxDb" id="8364-ENSXETP00000036910"/>
<dbReference type="GeneID" id="613102"/>
<dbReference type="KEGG" id="xtr:613102"/>
<dbReference type="AGR" id="Xenbase:XB-GENE-949196"/>
<dbReference type="CTD" id="80854"/>
<dbReference type="Xenbase" id="XB-GENE-949196">
    <property type="gene designation" value="setd7"/>
</dbReference>
<dbReference type="eggNOG" id="KOG1079">
    <property type="taxonomic scope" value="Eukaryota"/>
</dbReference>
<dbReference type="HOGENOM" id="CLU_803117_0_0_1"/>
<dbReference type="InParanoid" id="Q4QQN5"/>
<dbReference type="OMA" id="HSFIPNC"/>
<dbReference type="OrthoDB" id="294378at2759"/>
<dbReference type="PhylomeDB" id="Q4QQN5"/>
<dbReference type="TreeFam" id="TF106392"/>
<dbReference type="Proteomes" id="UP000008143">
    <property type="component" value="Chromosome 1"/>
</dbReference>
<dbReference type="GO" id="GO:0005694">
    <property type="term" value="C:chromosome"/>
    <property type="evidence" value="ECO:0007669"/>
    <property type="project" value="UniProtKB-SubCell"/>
</dbReference>
<dbReference type="GO" id="GO:0005634">
    <property type="term" value="C:nucleus"/>
    <property type="evidence" value="ECO:0007669"/>
    <property type="project" value="UniProtKB-SubCell"/>
</dbReference>
<dbReference type="GO" id="GO:0140945">
    <property type="term" value="F:histone H3K4 monomethyltransferase activity"/>
    <property type="evidence" value="ECO:0007669"/>
    <property type="project" value="UniProtKB-EC"/>
</dbReference>
<dbReference type="GO" id="GO:0042054">
    <property type="term" value="F:histone methyltransferase activity"/>
    <property type="evidence" value="ECO:0000250"/>
    <property type="project" value="UniProtKB"/>
</dbReference>
<dbReference type="GO" id="GO:0016279">
    <property type="term" value="F:protein-lysine N-methyltransferase activity"/>
    <property type="evidence" value="ECO:0000250"/>
    <property type="project" value="UniProtKB"/>
</dbReference>
<dbReference type="GO" id="GO:0018027">
    <property type="term" value="P:peptidyl-lysine dimethylation"/>
    <property type="evidence" value="ECO:0000250"/>
    <property type="project" value="UniProtKB"/>
</dbReference>
<dbReference type="GO" id="GO:0018026">
    <property type="term" value="P:peptidyl-lysine monomethylation"/>
    <property type="evidence" value="ECO:0000250"/>
    <property type="project" value="UniProtKB"/>
</dbReference>
<dbReference type="GO" id="GO:0006355">
    <property type="term" value="P:regulation of DNA-templated transcription"/>
    <property type="evidence" value="ECO:0007669"/>
    <property type="project" value="InterPro"/>
</dbReference>
<dbReference type="CDD" id="cd10530">
    <property type="entry name" value="SET_SETD7"/>
    <property type="match status" value="1"/>
</dbReference>
<dbReference type="FunFam" id="2.170.270.10:FF:000024">
    <property type="entry name" value="Histone-lysine N-methyltransferase SETD7"/>
    <property type="match status" value="1"/>
</dbReference>
<dbReference type="FunFam" id="2.20.110.10:FF:000004">
    <property type="entry name" value="Histone-lysine N-methyltransferase SETD7"/>
    <property type="match status" value="1"/>
</dbReference>
<dbReference type="FunFam" id="2.20.110.10:FF:000005">
    <property type="entry name" value="Histone-lysine N-methyltransferase SETD7"/>
    <property type="match status" value="1"/>
</dbReference>
<dbReference type="Gene3D" id="2.20.110.10">
    <property type="entry name" value="Histone H3 K4-specific methyltransferase SET7/9 N-terminal domain"/>
    <property type="match status" value="3"/>
</dbReference>
<dbReference type="Gene3D" id="2.170.270.10">
    <property type="entry name" value="SET domain"/>
    <property type="match status" value="1"/>
</dbReference>
<dbReference type="InterPro" id="IPR017155">
    <property type="entry name" value="Hist-Lys_N-MeTrfase_SETD7"/>
</dbReference>
<dbReference type="InterPro" id="IPR003409">
    <property type="entry name" value="MORN"/>
</dbReference>
<dbReference type="InterPro" id="IPR001214">
    <property type="entry name" value="SET_dom"/>
</dbReference>
<dbReference type="InterPro" id="IPR046341">
    <property type="entry name" value="SET_dom_sf"/>
</dbReference>
<dbReference type="InterPro" id="IPR054533">
    <property type="entry name" value="SETD7_N"/>
</dbReference>
<dbReference type="InterPro" id="IPR044436">
    <property type="entry name" value="SETD7_SET"/>
</dbReference>
<dbReference type="PANTHER" id="PTHR46820">
    <property type="entry name" value="HISTONE-LYSINE N-METHYLTRANSFERASE SETD7"/>
    <property type="match status" value="1"/>
</dbReference>
<dbReference type="PANTHER" id="PTHR46820:SF1">
    <property type="entry name" value="HISTONE-LYSINE N-METHYLTRANSFERASE SETD7"/>
    <property type="match status" value="1"/>
</dbReference>
<dbReference type="Pfam" id="PF02493">
    <property type="entry name" value="MORN"/>
    <property type="match status" value="2"/>
</dbReference>
<dbReference type="Pfam" id="PF00856">
    <property type="entry name" value="SET"/>
    <property type="match status" value="1"/>
</dbReference>
<dbReference type="Pfam" id="PF22648">
    <property type="entry name" value="SET7_N"/>
    <property type="match status" value="1"/>
</dbReference>
<dbReference type="PIRSF" id="PIRSF037249">
    <property type="entry name" value="Histone_Lys_mtfrase_SET"/>
    <property type="match status" value="1"/>
</dbReference>
<dbReference type="SUPFAM" id="SSF82185">
    <property type="entry name" value="Histone H3 K4-specific methyltransferase SET7/9 N-terminal domain"/>
    <property type="match status" value="1"/>
</dbReference>
<dbReference type="SUPFAM" id="SSF82199">
    <property type="entry name" value="SET domain"/>
    <property type="match status" value="1"/>
</dbReference>
<dbReference type="PROSITE" id="PS51577">
    <property type="entry name" value="SAM_MT43_SET7"/>
    <property type="match status" value="1"/>
</dbReference>
<dbReference type="PROSITE" id="PS50280">
    <property type="entry name" value="SET"/>
    <property type="match status" value="1"/>
</dbReference>
<keyword id="KW-0010">Activator</keyword>
<keyword id="KW-0156">Chromatin regulator</keyword>
<keyword id="KW-0158">Chromosome</keyword>
<keyword id="KW-0489">Methyltransferase</keyword>
<keyword id="KW-0539">Nucleus</keyword>
<keyword id="KW-1185">Reference proteome</keyword>
<keyword id="KW-0677">Repeat</keyword>
<keyword id="KW-0949">S-adenosyl-L-methionine</keyword>
<keyword id="KW-0804">Transcription</keyword>
<keyword id="KW-0805">Transcription regulation</keyword>
<keyword id="KW-0808">Transferase</keyword>
<organism>
    <name type="scientific">Xenopus tropicalis</name>
    <name type="common">Western clawed frog</name>
    <name type="synonym">Silurana tropicalis</name>
    <dbReference type="NCBI Taxonomy" id="8364"/>
    <lineage>
        <taxon>Eukaryota</taxon>
        <taxon>Metazoa</taxon>
        <taxon>Chordata</taxon>
        <taxon>Craniata</taxon>
        <taxon>Vertebrata</taxon>
        <taxon>Euteleostomi</taxon>
        <taxon>Amphibia</taxon>
        <taxon>Batrachia</taxon>
        <taxon>Anura</taxon>
        <taxon>Pipoidea</taxon>
        <taxon>Pipidae</taxon>
        <taxon>Xenopodinae</taxon>
        <taxon>Xenopus</taxon>
        <taxon>Silurana</taxon>
    </lineage>
</organism>